<keyword id="KW-0472">Membrane</keyword>
<keyword id="KW-0812">Transmembrane</keyword>
<keyword id="KW-1133">Transmembrane helix</keyword>
<proteinExistence type="evidence at transcript level"/>
<sequence length="295" mass="33329">MRRLTDSFILGLAKGAVIPGLYTFRMTEGRSPLGQIGVLITVAISFLLTFKRFDPRFYKPIGDFKIVFLSLMAPKLPSLLSAVVMICLIFSEMRLRMILSRCVMIMPSYSPAVFTGIMVSLFFKSQMFDDYSVLITAASLLPITVRYGWMIRSSGFLLGLQKYRPILKSTSFREVDLKCLVKFTVEFLLLFTILWIGKMFLSMPKSNHLFFLTVVNNVFFKLNVFKAAACAVVAILSGLMMNVCLYRIIFEAFVGLGFSSIMLNLSSDLKDRSFYAGDLLNGFFCLVVCCMYFGV</sequence>
<evidence type="ECO:0000255" key="1"/>
<evidence type="ECO:0000305" key="2"/>
<protein>
    <recommendedName>
        <fullName>Protein U26</fullName>
    </recommendedName>
</protein>
<gene>
    <name type="primary">U26</name>
</gene>
<dbReference type="EMBL" id="M62700">
    <property type="protein sequence ID" value="AAA43854.1"/>
    <property type="status" value="ALT_FRAME"/>
    <property type="molecule type" value="mRNA"/>
</dbReference>
<dbReference type="GO" id="GO:0016020">
    <property type="term" value="C:membrane"/>
    <property type="evidence" value="ECO:0007669"/>
    <property type="project" value="UniProtKB-SubCell"/>
</dbReference>
<dbReference type="InterPro" id="IPR009980">
    <property type="entry name" value="Herpes_U26"/>
</dbReference>
<dbReference type="Pfam" id="PF07402">
    <property type="entry name" value="Herpes_U26"/>
    <property type="match status" value="1"/>
</dbReference>
<organismHost>
    <name type="scientific">Homo sapiens</name>
    <name type="common">Human</name>
    <dbReference type="NCBI Taxonomy" id="9606"/>
</organismHost>
<accession>P52443</accession>
<name>VU26_HHV6G</name>
<feature type="chain" id="PRO_0000116285" description="Protein U26">
    <location>
        <begin position="1"/>
        <end position="295"/>
    </location>
</feature>
<feature type="transmembrane region" description="Helical" evidence="1">
    <location>
        <begin position="31"/>
        <end position="51"/>
    </location>
</feature>
<feature type="transmembrane region" description="Helical" evidence="1">
    <location>
        <begin position="66"/>
        <end position="86"/>
    </location>
</feature>
<feature type="transmembrane region" description="Helical" evidence="1">
    <location>
        <begin position="103"/>
        <end position="123"/>
    </location>
</feature>
<feature type="transmembrane region" description="Helical" evidence="1">
    <location>
        <begin position="131"/>
        <end position="151"/>
    </location>
</feature>
<feature type="transmembrane region" description="Helical" evidence="1">
    <location>
        <begin position="183"/>
        <end position="203"/>
    </location>
</feature>
<feature type="transmembrane region" description="Helical" evidence="1">
    <location>
        <begin position="218"/>
        <end position="238"/>
    </location>
</feature>
<feature type="transmembrane region" description="Helical" evidence="1">
    <location>
        <begin position="243"/>
        <end position="263"/>
    </location>
</feature>
<feature type="transmembrane region" description="Helical" evidence="1">
    <location>
        <begin position="274"/>
        <end position="294"/>
    </location>
</feature>
<comment type="subcellular location">
    <subcellularLocation>
        <location evidence="2">Membrane</location>
        <topology evidence="2">Multi-pass membrane protein</topology>
    </subcellularLocation>
</comment>
<comment type="sequence caution" evidence="2">
    <conflict type="frameshift">
        <sequence resource="EMBL-CDS" id="AAA43854"/>
    </conflict>
</comment>
<reference key="1">
    <citation type="journal article" date="1991" name="J. Virol.">
        <title>Identification, characterization, and sequence analysis of a cDNA encoding a phosphoprotein of human herpesvirus 6.</title>
        <authorList>
            <person name="Chang C.K."/>
            <person name="Balachandran N."/>
        </authorList>
    </citation>
    <scope>NUCLEOTIDE SEQUENCE [MRNA]</scope>
</reference>
<reference key="2">
    <citation type="submission" date="1994-01" db="EMBL/GenBank/DDBJ databases">
        <authorList>
            <person name="Chang C.K."/>
            <person name="Balachandran N."/>
        </authorList>
    </citation>
    <scope>SEQUENCE REVISION</scope>
</reference>
<organism>
    <name type="scientific">Human herpesvirus 6A (strain GS)</name>
    <name type="common">HHV-6 variant A</name>
    <name type="synonym">Human B lymphotropic virus</name>
    <dbReference type="NCBI Taxonomy" id="10369"/>
    <lineage>
        <taxon>Viruses</taxon>
        <taxon>Duplodnaviria</taxon>
        <taxon>Heunggongvirae</taxon>
        <taxon>Peploviricota</taxon>
        <taxon>Herviviricetes</taxon>
        <taxon>Herpesvirales</taxon>
        <taxon>Orthoherpesviridae</taxon>
        <taxon>Betaherpesvirinae</taxon>
        <taxon>Roseolovirus</taxon>
        <taxon>Roseolovirus humanbeta6a</taxon>
        <taxon>Human betaherpesvirus 6A</taxon>
    </lineage>
</organism>